<gene>
    <name type="primary">OR52I1</name>
</gene>
<sequence length="324" mass="35386">MLGPAYNHTMETPASFLLVGIPGLQSSHLWLAISLSAMYITALLGNTLIVTAIWMDSTRHEPMYCFLCVLAAVDIVMASSVVPKMVSIFCSGDSSISFSACFTQMFFVHLATAVETGLLLTMAFDRYVAICKPLHYKRILTPQVMLGMSMAVTIRAVTFMTPLSWMMNHLPFCGSNVVVHSYCKHIALARLACADPVPSSLYSLIGSSLMVGSDVAFIAASYILILRAVFDLSSKTAQLKALSTCGSHVGVMALYYLPGMASIYAAWLGQDIVPLHTQVLLADLYVIIPATLNPIIYGMRTKQLLEGIWSYLMHFLFDHSNLGS</sequence>
<dbReference type="EMBL" id="AB065788">
    <property type="protein sequence ID" value="BAC06007.1"/>
    <property type="status" value="ALT_INIT"/>
    <property type="molecule type" value="Genomic_DNA"/>
</dbReference>
<dbReference type="EMBL" id="BK004371">
    <property type="protein sequence ID" value="DAA04769.1"/>
    <property type="molecule type" value="Genomic_DNA"/>
</dbReference>
<dbReference type="CCDS" id="CCDS59223.1"/>
<dbReference type="RefSeq" id="NP_001005169.1">
    <property type="nucleotide sequence ID" value="NM_001005169.1"/>
</dbReference>
<dbReference type="SMR" id="Q8NGK6"/>
<dbReference type="BioGRID" id="133367">
    <property type="interactions" value="5"/>
</dbReference>
<dbReference type="FunCoup" id="Q8NGK6">
    <property type="interactions" value="440"/>
</dbReference>
<dbReference type="IntAct" id="Q8NGK6">
    <property type="interactions" value="4"/>
</dbReference>
<dbReference type="STRING" id="9606.ENSP00000436453"/>
<dbReference type="GlyCosmos" id="Q8NGK6">
    <property type="glycosylation" value="1 site, No reported glycans"/>
</dbReference>
<dbReference type="GlyGen" id="Q8NGK6">
    <property type="glycosylation" value="1 site"/>
</dbReference>
<dbReference type="iPTMnet" id="Q8NGK6"/>
<dbReference type="PhosphoSitePlus" id="Q8NGK6"/>
<dbReference type="BioMuta" id="OR52I1"/>
<dbReference type="DMDM" id="38372717"/>
<dbReference type="jPOST" id="Q8NGK6"/>
<dbReference type="PaxDb" id="9606-ENSP00000436453"/>
<dbReference type="Antibodypedia" id="67157">
    <property type="antibodies" value="59 antibodies from 16 providers"/>
</dbReference>
<dbReference type="DNASU" id="390037"/>
<dbReference type="Ensembl" id="ENST00000530443.4">
    <property type="protein sequence ID" value="ENSP00000436453.1"/>
    <property type="gene ID" value="ENSG00000232268.8"/>
</dbReference>
<dbReference type="GeneID" id="390037"/>
<dbReference type="KEGG" id="hsa:390037"/>
<dbReference type="MANE-Select" id="ENST00000530443.4">
    <property type="protein sequence ID" value="ENSP00000436453.1"/>
    <property type="RefSeq nucleotide sequence ID" value="NM_001005169.1"/>
    <property type="RefSeq protein sequence ID" value="NP_001005169.1"/>
</dbReference>
<dbReference type="UCSC" id="uc010qyi.2">
    <property type="organism name" value="human"/>
</dbReference>
<dbReference type="AGR" id="HGNC:15220"/>
<dbReference type="CTD" id="390037"/>
<dbReference type="DisGeNET" id="390037"/>
<dbReference type="GeneCards" id="OR52I1"/>
<dbReference type="HGNC" id="HGNC:15220">
    <property type="gene designation" value="OR52I1"/>
</dbReference>
<dbReference type="HPA" id="ENSG00000232268">
    <property type="expression patterns" value="Not detected"/>
</dbReference>
<dbReference type="neXtProt" id="NX_Q8NGK6"/>
<dbReference type="OpenTargets" id="ENSG00000232268"/>
<dbReference type="PharmGKB" id="PA32412"/>
<dbReference type="VEuPathDB" id="HostDB:ENSG00000232268"/>
<dbReference type="eggNOG" id="ENOG502SX3E">
    <property type="taxonomic scope" value="Eukaryota"/>
</dbReference>
<dbReference type="GeneTree" id="ENSGT01130000278320"/>
<dbReference type="HOGENOM" id="CLU_012526_0_0_1"/>
<dbReference type="InParanoid" id="Q8NGK6"/>
<dbReference type="OMA" id="FYGSHMV"/>
<dbReference type="OrthoDB" id="5969463at2759"/>
<dbReference type="PAN-GO" id="Q8NGK6">
    <property type="GO annotations" value="0 GO annotations based on evolutionary models"/>
</dbReference>
<dbReference type="PhylomeDB" id="Q8NGK6"/>
<dbReference type="PathwayCommons" id="Q8NGK6"/>
<dbReference type="Reactome" id="R-HSA-9752946">
    <property type="pathway name" value="Expression and translocation of olfactory receptors"/>
</dbReference>
<dbReference type="BioGRID-ORCS" id="390037">
    <property type="hits" value="8 hits in 680 CRISPR screens"/>
</dbReference>
<dbReference type="GeneWiki" id="OR52I1"/>
<dbReference type="GenomeRNAi" id="390037"/>
<dbReference type="Pharos" id="Q8NGK6">
    <property type="development level" value="Tdark"/>
</dbReference>
<dbReference type="PRO" id="PR:Q8NGK6"/>
<dbReference type="Proteomes" id="UP000005640">
    <property type="component" value="Chromosome 11"/>
</dbReference>
<dbReference type="RNAct" id="Q8NGK6">
    <property type="molecule type" value="protein"/>
</dbReference>
<dbReference type="Bgee" id="ENSG00000232268">
    <property type="expression patterns" value="Expressed in male germ line stem cell (sensu Vertebrata) in testis and 1 other cell type or tissue"/>
</dbReference>
<dbReference type="ExpressionAtlas" id="Q8NGK6">
    <property type="expression patterns" value="baseline and differential"/>
</dbReference>
<dbReference type="GO" id="GO:0005886">
    <property type="term" value="C:plasma membrane"/>
    <property type="evidence" value="ECO:0000318"/>
    <property type="project" value="GO_Central"/>
</dbReference>
<dbReference type="GO" id="GO:0004930">
    <property type="term" value="F:G protein-coupled receptor activity"/>
    <property type="evidence" value="ECO:0007669"/>
    <property type="project" value="UniProtKB-KW"/>
</dbReference>
<dbReference type="GO" id="GO:0004984">
    <property type="term" value="F:olfactory receptor activity"/>
    <property type="evidence" value="ECO:0000318"/>
    <property type="project" value="GO_Central"/>
</dbReference>
<dbReference type="CDD" id="cd15950">
    <property type="entry name" value="7tmA_OR52I-like"/>
    <property type="match status" value="1"/>
</dbReference>
<dbReference type="FunFam" id="1.20.1070.10:FF:000024">
    <property type="entry name" value="Olfactory receptor"/>
    <property type="match status" value="1"/>
</dbReference>
<dbReference type="Gene3D" id="1.20.1070.10">
    <property type="entry name" value="Rhodopsin 7-helix transmembrane proteins"/>
    <property type="match status" value="1"/>
</dbReference>
<dbReference type="InterPro" id="IPR000276">
    <property type="entry name" value="GPCR_Rhodpsn"/>
</dbReference>
<dbReference type="InterPro" id="IPR017452">
    <property type="entry name" value="GPCR_Rhodpsn_7TM"/>
</dbReference>
<dbReference type="InterPro" id="IPR000725">
    <property type="entry name" value="Olfact_rcpt"/>
</dbReference>
<dbReference type="InterPro" id="IPR050402">
    <property type="entry name" value="OR51/52/56-like"/>
</dbReference>
<dbReference type="PANTHER" id="PTHR26450:SF177">
    <property type="entry name" value="OLFACTORY RECEPTOR 52I1-RELATED"/>
    <property type="match status" value="1"/>
</dbReference>
<dbReference type="PANTHER" id="PTHR26450">
    <property type="entry name" value="OLFACTORY RECEPTOR 56B1-RELATED"/>
    <property type="match status" value="1"/>
</dbReference>
<dbReference type="Pfam" id="PF13853">
    <property type="entry name" value="7tm_4"/>
    <property type="match status" value="1"/>
</dbReference>
<dbReference type="PRINTS" id="PR00237">
    <property type="entry name" value="GPCRRHODOPSN"/>
</dbReference>
<dbReference type="PRINTS" id="PR00245">
    <property type="entry name" value="OLFACTORYR"/>
</dbReference>
<dbReference type="SUPFAM" id="SSF81321">
    <property type="entry name" value="Family A G protein-coupled receptor-like"/>
    <property type="match status" value="1"/>
</dbReference>
<dbReference type="PROSITE" id="PS00237">
    <property type="entry name" value="G_PROTEIN_RECEP_F1_1"/>
    <property type="match status" value="1"/>
</dbReference>
<dbReference type="PROSITE" id="PS50262">
    <property type="entry name" value="G_PROTEIN_RECEP_F1_2"/>
    <property type="match status" value="1"/>
</dbReference>
<protein>
    <recommendedName>
        <fullName>Olfactory receptor 52I1</fullName>
    </recommendedName>
    <alternativeName>
        <fullName>Olfactory receptor OR11-13</fullName>
    </alternativeName>
</protein>
<feature type="chain" id="PRO_0000150778" description="Olfactory receptor 52I1">
    <location>
        <begin position="1"/>
        <end position="324"/>
    </location>
</feature>
<feature type="topological domain" description="Extracellular" evidence="1">
    <location>
        <begin position="1"/>
        <end position="29"/>
    </location>
</feature>
<feature type="transmembrane region" description="Helical; Name=1" evidence="1">
    <location>
        <begin position="30"/>
        <end position="50"/>
    </location>
</feature>
<feature type="topological domain" description="Cytoplasmic" evidence="1">
    <location>
        <begin position="51"/>
        <end position="58"/>
    </location>
</feature>
<feature type="transmembrane region" description="Helical; Name=2" evidence="1">
    <location>
        <begin position="59"/>
        <end position="79"/>
    </location>
</feature>
<feature type="topological domain" description="Extracellular" evidence="1">
    <location>
        <begin position="80"/>
        <end position="103"/>
    </location>
</feature>
<feature type="transmembrane region" description="Helical; Name=3" evidence="1">
    <location>
        <begin position="104"/>
        <end position="124"/>
    </location>
</feature>
<feature type="topological domain" description="Cytoplasmic" evidence="1">
    <location>
        <begin position="125"/>
        <end position="143"/>
    </location>
</feature>
<feature type="transmembrane region" description="Helical; Name=4" evidence="1">
    <location>
        <begin position="144"/>
        <end position="164"/>
    </location>
</feature>
<feature type="topological domain" description="Extracellular" evidence="1">
    <location>
        <begin position="165"/>
        <end position="200"/>
    </location>
</feature>
<feature type="transmembrane region" description="Helical; Name=5" evidence="1">
    <location>
        <begin position="201"/>
        <end position="221"/>
    </location>
</feature>
<feature type="topological domain" description="Cytoplasmic" evidence="1">
    <location>
        <begin position="222"/>
        <end position="241"/>
    </location>
</feature>
<feature type="transmembrane region" description="Helical; Name=6" evidence="1">
    <location>
        <begin position="242"/>
        <end position="262"/>
    </location>
</feature>
<feature type="topological domain" description="Extracellular" evidence="1">
    <location>
        <begin position="263"/>
        <end position="278"/>
    </location>
</feature>
<feature type="transmembrane region" description="Helical; Name=7" evidence="1">
    <location>
        <begin position="279"/>
        <end position="299"/>
    </location>
</feature>
<feature type="topological domain" description="Cytoplasmic" evidence="1">
    <location>
        <begin position="300"/>
        <end position="324"/>
    </location>
</feature>
<feature type="glycosylation site" description="N-linked (GlcNAc...) asparagine" evidence="1">
    <location>
        <position position="7"/>
    </location>
</feature>
<feature type="disulfide bond" evidence="2">
    <location>
        <begin position="101"/>
        <end position="193"/>
    </location>
</feature>
<feature type="sequence variant" id="VAR_034342" description="In dbSNP:rs2010722.">
    <original>T</original>
    <variation>I</variation>
    <location>
        <position position="41"/>
    </location>
</feature>
<proteinExistence type="inferred from homology"/>
<keyword id="KW-1003">Cell membrane</keyword>
<keyword id="KW-1015">Disulfide bond</keyword>
<keyword id="KW-0297">G-protein coupled receptor</keyword>
<keyword id="KW-0325">Glycoprotein</keyword>
<keyword id="KW-0472">Membrane</keyword>
<keyword id="KW-0552">Olfaction</keyword>
<keyword id="KW-0675">Receptor</keyword>
<keyword id="KW-1185">Reference proteome</keyword>
<keyword id="KW-0716">Sensory transduction</keyword>
<keyword id="KW-0807">Transducer</keyword>
<keyword id="KW-0812">Transmembrane</keyword>
<keyword id="KW-1133">Transmembrane helix</keyword>
<evidence type="ECO:0000255" key="1"/>
<evidence type="ECO:0000255" key="2">
    <source>
        <dbReference type="PROSITE-ProRule" id="PRU00521"/>
    </source>
</evidence>
<evidence type="ECO:0000305" key="3"/>
<accession>Q8NGK6</accession>
<accession>Q6IF91</accession>
<reference key="1">
    <citation type="submission" date="2001-07" db="EMBL/GenBank/DDBJ databases">
        <title>Genome-wide discovery and analysis of human seven transmembrane helix receptor genes.</title>
        <authorList>
            <person name="Suwa M."/>
            <person name="Sato T."/>
            <person name="Okouchi I."/>
            <person name="Arita M."/>
            <person name="Futami K."/>
            <person name="Matsumoto S."/>
            <person name="Tsutsumi S."/>
            <person name="Aburatani H."/>
            <person name="Asai K."/>
            <person name="Akiyama Y."/>
        </authorList>
    </citation>
    <scope>NUCLEOTIDE SEQUENCE [GENOMIC DNA]</scope>
</reference>
<reference key="2">
    <citation type="journal article" date="2004" name="Proc. Natl. Acad. Sci. U.S.A.">
        <title>The human olfactory receptor gene family.</title>
        <authorList>
            <person name="Malnic B."/>
            <person name="Godfrey P.A."/>
            <person name="Buck L.B."/>
        </authorList>
    </citation>
    <scope>IDENTIFICATION</scope>
</reference>
<reference key="3">
    <citation type="journal article" date="2004" name="Proc. Natl. Acad. Sci. U.S.A.">
        <authorList>
            <person name="Malnic B."/>
            <person name="Godfrey P.A."/>
            <person name="Buck L.B."/>
        </authorList>
    </citation>
    <scope>ERRATUM OF PUBMED:14983052</scope>
</reference>
<name>O52I1_HUMAN</name>
<organism>
    <name type="scientific">Homo sapiens</name>
    <name type="common">Human</name>
    <dbReference type="NCBI Taxonomy" id="9606"/>
    <lineage>
        <taxon>Eukaryota</taxon>
        <taxon>Metazoa</taxon>
        <taxon>Chordata</taxon>
        <taxon>Craniata</taxon>
        <taxon>Vertebrata</taxon>
        <taxon>Euteleostomi</taxon>
        <taxon>Mammalia</taxon>
        <taxon>Eutheria</taxon>
        <taxon>Euarchontoglires</taxon>
        <taxon>Primates</taxon>
        <taxon>Haplorrhini</taxon>
        <taxon>Catarrhini</taxon>
        <taxon>Hominidae</taxon>
        <taxon>Homo</taxon>
    </lineage>
</organism>
<comment type="function">
    <text evidence="3">Odorant receptor.</text>
</comment>
<comment type="subcellular location">
    <subcellularLocation>
        <location>Cell membrane</location>
        <topology>Multi-pass membrane protein</topology>
    </subcellularLocation>
</comment>
<comment type="similarity">
    <text evidence="2">Belongs to the G-protein coupled receptor 1 family.</text>
</comment>
<comment type="sequence caution" evidence="3">
    <conflict type="erroneous initiation">
        <sequence resource="EMBL-CDS" id="BAC06007"/>
    </conflict>
</comment>
<comment type="online information" name="Human Olfactory Receptor Data Exploratorium (HORDE)">
    <link uri="http://genome.weizmann.ac.il/horde/card/index/symbol:OR52I1"/>
</comment>